<dbReference type="EC" id="3.4.11.-" evidence="1"/>
<dbReference type="EMBL" id="CP000094">
    <property type="protein sequence ID" value="ABA73433.1"/>
    <property type="molecule type" value="Genomic_DNA"/>
</dbReference>
<dbReference type="RefSeq" id="WP_011333180.1">
    <property type="nucleotide sequence ID" value="NC_007492.2"/>
</dbReference>
<dbReference type="SMR" id="Q3KFM3"/>
<dbReference type="KEGG" id="pfo:Pfl01_1690"/>
<dbReference type="eggNOG" id="COG1362">
    <property type="taxonomic scope" value="Bacteria"/>
</dbReference>
<dbReference type="HOGENOM" id="CLU_019532_2_0_6"/>
<dbReference type="Proteomes" id="UP000002704">
    <property type="component" value="Chromosome"/>
</dbReference>
<dbReference type="GO" id="GO:0005737">
    <property type="term" value="C:cytoplasm"/>
    <property type="evidence" value="ECO:0007669"/>
    <property type="project" value="UniProtKB-ARBA"/>
</dbReference>
<dbReference type="GO" id="GO:0004177">
    <property type="term" value="F:aminopeptidase activity"/>
    <property type="evidence" value="ECO:0007669"/>
    <property type="project" value="UniProtKB-UniRule"/>
</dbReference>
<dbReference type="GO" id="GO:0008237">
    <property type="term" value="F:metallopeptidase activity"/>
    <property type="evidence" value="ECO:0007669"/>
    <property type="project" value="UniProtKB-UniRule"/>
</dbReference>
<dbReference type="GO" id="GO:0008270">
    <property type="term" value="F:zinc ion binding"/>
    <property type="evidence" value="ECO:0007669"/>
    <property type="project" value="UniProtKB-UniRule"/>
</dbReference>
<dbReference type="GO" id="GO:0006508">
    <property type="term" value="P:proteolysis"/>
    <property type="evidence" value="ECO:0007669"/>
    <property type="project" value="UniProtKB-UniRule"/>
</dbReference>
<dbReference type="CDD" id="cd05658">
    <property type="entry name" value="M18_DAP"/>
    <property type="match status" value="1"/>
</dbReference>
<dbReference type="FunFam" id="2.30.250.10:FF:000003">
    <property type="entry name" value="Probable M18 family aminopeptidase 2"/>
    <property type="match status" value="1"/>
</dbReference>
<dbReference type="Gene3D" id="2.30.250.10">
    <property type="entry name" value="Aminopeptidase i, Domain 2"/>
    <property type="match status" value="1"/>
</dbReference>
<dbReference type="Gene3D" id="3.40.630.10">
    <property type="entry name" value="Zn peptidases"/>
    <property type="match status" value="1"/>
</dbReference>
<dbReference type="HAMAP" id="MF_00467">
    <property type="entry name" value="Aminopeptidase_M18_2"/>
    <property type="match status" value="1"/>
</dbReference>
<dbReference type="InterPro" id="IPR022984">
    <property type="entry name" value="M18_aminopeptidase_2"/>
</dbReference>
<dbReference type="InterPro" id="IPR001948">
    <property type="entry name" value="Peptidase_M18"/>
</dbReference>
<dbReference type="InterPro" id="IPR023358">
    <property type="entry name" value="Peptidase_M18_dom2"/>
</dbReference>
<dbReference type="NCBIfam" id="NF002759">
    <property type="entry name" value="PRK02813.1"/>
    <property type="match status" value="1"/>
</dbReference>
<dbReference type="PANTHER" id="PTHR28570">
    <property type="entry name" value="ASPARTYL AMINOPEPTIDASE"/>
    <property type="match status" value="1"/>
</dbReference>
<dbReference type="PANTHER" id="PTHR28570:SF3">
    <property type="entry name" value="ASPARTYL AMINOPEPTIDASE"/>
    <property type="match status" value="1"/>
</dbReference>
<dbReference type="Pfam" id="PF02127">
    <property type="entry name" value="Peptidase_M18"/>
    <property type="match status" value="1"/>
</dbReference>
<dbReference type="PRINTS" id="PR00932">
    <property type="entry name" value="AMINO1PTASE"/>
</dbReference>
<dbReference type="SUPFAM" id="SSF101821">
    <property type="entry name" value="Aminopeptidase/glucanase lid domain"/>
    <property type="match status" value="1"/>
</dbReference>
<dbReference type="SUPFAM" id="SSF53187">
    <property type="entry name" value="Zn-dependent exopeptidases"/>
    <property type="match status" value="1"/>
</dbReference>
<protein>
    <recommendedName>
        <fullName evidence="1">Probable M18 family aminopeptidase 2</fullName>
        <ecNumber evidence="1">3.4.11.-</ecNumber>
    </recommendedName>
</protein>
<name>APEB_PSEPF</name>
<reference key="1">
    <citation type="journal article" date="2009" name="Genome Biol.">
        <title>Genomic and genetic analyses of diversity and plant interactions of Pseudomonas fluorescens.</title>
        <authorList>
            <person name="Silby M.W."/>
            <person name="Cerdeno-Tarraga A.M."/>
            <person name="Vernikos G.S."/>
            <person name="Giddens S.R."/>
            <person name="Jackson R.W."/>
            <person name="Preston G.M."/>
            <person name="Zhang X.-X."/>
            <person name="Moon C.D."/>
            <person name="Gehrig S.M."/>
            <person name="Godfrey S.A.C."/>
            <person name="Knight C.G."/>
            <person name="Malone J.G."/>
            <person name="Robinson Z."/>
            <person name="Spiers A.J."/>
            <person name="Harris S."/>
            <person name="Challis G.L."/>
            <person name="Yaxley A.M."/>
            <person name="Harris D."/>
            <person name="Seeger K."/>
            <person name="Murphy L."/>
            <person name="Rutter S."/>
            <person name="Squares R."/>
            <person name="Quail M.A."/>
            <person name="Saunders E."/>
            <person name="Mavromatis K."/>
            <person name="Brettin T.S."/>
            <person name="Bentley S.D."/>
            <person name="Hothersall J."/>
            <person name="Stephens E."/>
            <person name="Thomas C.M."/>
            <person name="Parkhill J."/>
            <person name="Levy S.B."/>
            <person name="Rainey P.B."/>
            <person name="Thomson N.R."/>
        </authorList>
    </citation>
    <scope>NUCLEOTIDE SEQUENCE [LARGE SCALE GENOMIC DNA]</scope>
    <source>
        <strain>Pf0-1</strain>
    </source>
</reference>
<sequence length="429" mass="47059">MREELNQGLIDFLKASPTPFHATASLVQRLEAAGYVRLDERETWHTEANGRYYVTRNDSSIVAIKMGRNSPLHDGIRLVGAHTDSPCLRVKPQPELQRQGFWQLGVEVYGGALLAPWFDRDLSLAGRVTFRRDGKVESQLIDFKAPIAIIPNLAIHLNREANQGWAINAQTELPPILAQFAGDERVDFRAVLTDQLAREHGLNADVVLDYELSFYDTQSAAVIGLHGDFIAGARLDNLLSCYAGLQALLNADTEETCVLVCNDHEEVGSCSACGADGPMLEQTLRRLLPEGDEFVRTIQKSLLVSADNAHGVHPNYAEKHDANHGPKLNAGPVIKVNSNQRYATNSETAGFFRHLCMAEEVPVQSFVVRSDMGCGSTIGPITASNLGVRTVDIGLPTFAMHSIRELCGSHDLAHLVKVLSAFYASRELP</sequence>
<feature type="chain" id="PRO_1000013706" description="Probable M18 family aminopeptidase 2">
    <location>
        <begin position="1"/>
        <end position="429"/>
    </location>
</feature>
<feature type="binding site" evidence="1">
    <location>
        <position position="82"/>
    </location>
    <ligand>
        <name>Zn(2+)</name>
        <dbReference type="ChEBI" id="CHEBI:29105"/>
    </ligand>
</feature>
<feature type="binding site" evidence="1">
    <location>
        <position position="156"/>
    </location>
    <ligand>
        <name>Zn(2+)</name>
        <dbReference type="ChEBI" id="CHEBI:29105"/>
    </ligand>
</feature>
<feature type="binding site" evidence="1">
    <location>
        <position position="401"/>
    </location>
    <ligand>
        <name>Zn(2+)</name>
        <dbReference type="ChEBI" id="CHEBI:29105"/>
    </ligand>
</feature>
<accession>Q3KFM3</accession>
<keyword id="KW-0031">Aminopeptidase</keyword>
<keyword id="KW-0378">Hydrolase</keyword>
<keyword id="KW-0479">Metal-binding</keyword>
<keyword id="KW-0482">Metalloprotease</keyword>
<keyword id="KW-0645">Protease</keyword>
<keyword id="KW-0862">Zinc</keyword>
<evidence type="ECO:0000255" key="1">
    <source>
        <dbReference type="HAMAP-Rule" id="MF_00467"/>
    </source>
</evidence>
<organism>
    <name type="scientific">Pseudomonas fluorescens (strain Pf0-1)</name>
    <dbReference type="NCBI Taxonomy" id="205922"/>
    <lineage>
        <taxon>Bacteria</taxon>
        <taxon>Pseudomonadati</taxon>
        <taxon>Pseudomonadota</taxon>
        <taxon>Gammaproteobacteria</taxon>
        <taxon>Pseudomonadales</taxon>
        <taxon>Pseudomonadaceae</taxon>
        <taxon>Pseudomonas</taxon>
    </lineage>
</organism>
<comment type="cofactor">
    <cofactor evidence="1">
        <name>Zn(2+)</name>
        <dbReference type="ChEBI" id="CHEBI:29105"/>
    </cofactor>
</comment>
<comment type="similarity">
    <text evidence="1">Belongs to the peptidase M18 family.</text>
</comment>
<gene>
    <name evidence="1" type="primary">apeB</name>
    <name type="ordered locus">Pfl01_1690</name>
</gene>
<proteinExistence type="inferred from homology"/>